<gene>
    <name type="primary">TAR1</name>
    <name type="synonym">ART1</name>
    <name type="ordered locus">YLR154W-C</name>
    <name type="ORF">YLR154W-A</name>
</gene>
<reference key="1">
    <citation type="journal article" date="1997" name="Nature">
        <title>The nucleotide sequence of Saccharomyces cerevisiae chromosome XII.</title>
        <authorList>
            <person name="Johnston M."/>
            <person name="Hillier L.W."/>
            <person name="Riles L."/>
            <person name="Albermann K."/>
            <person name="Andre B."/>
            <person name="Ansorge W."/>
            <person name="Benes V."/>
            <person name="Brueckner M."/>
            <person name="Delius H."/>
            <person name="Dubois E."/>
            <person name="Duesterhoeft A."/>
            <person name="Entian K.-D."/>
            <person name="Floeth M."/>
            <person name="Goffeau A."/>
            <person name="Hebling U."/>
            <person name="Heumann K."/>
            <person name="Heuss-Neitzel D."/>
            <person name="Hilbert H."/>
            <person name="Hilger F."/>
            <person name="Kleine K."/>
            <person name="Koetter P."/>
            <person name="Louis E.J."/>
            <person name="Messenguy F."/>
            <person name="Mewes H.-W."/>
            <person name="Miosga T."/>
            <person name="Moestl D."/>
            <person name="Mueller-Auer S."/>
            <person name="Nentwich U."/>
            <person name="Obermaier B."/>
            <person name="Piravandi E."/>
            <person name="Pohl T.M."/>
            <person name="Portetelle D."/>
            <person name="Purnelle B."/>
            <person name="Rechmann S."/>
            <person name="Rieger M."/>
            <person name="Rinke M."/>
            <person name="Rose M."/>
            <person name="Scharfe M."/>
            <person name="Scherens B."/>
            <person name="Scholler P."/>
            <person name="Schwager C."/>
            <person name="Schwarz S."/>
            <person name="Underwood A.P."/>
            <person name="Urrestarazu L.A."/>
            <person name="Vandenbol M."/>
            <person name="Verhasselt P."/>
            <person name="Vierendeels F."/>
            <person name="Voet M."/>
            <person name="Volckaert G."/>
            <person name="Voss H."/>
            <person name="Wambutt R."/>
            <person name="Wedler E."/>
            <person name="Wedler H."/>
            <person name="Zimmermann F.K."/>
            <person name="Zollner A."/>
            <person name="Hani J."/>
            <person name="Hoheisel J.D."/>
        </authorList>
    </citation>
    <scope>NUCLEOTIDE SEQUENCE [LARGE SCALE GENOMIC DNA]</scope>
    <source>
        <strain>ATCC 204508 / S288c</strain>
    </source>
</reference>
<reference key="2">
    <citation type="journal article" date="2014" name="G3 (Bethesda)">
        <title>The reference genome sequence of Saccharomyces cerevisiae: Then and now.</title>
        <authorList>
            <person name="Engel S.R."/>
            <person name="Dietrich F.S."/>
            <person name="Fisk D.G."/>
            <person name="Binkley G."/>
            <person name="Balakrishnan R."/>
            <person name="Costanzo M.C."/>
            <person name="Dwight S.S."/>
            <person name="Hitz B.C."/>
            <person name="Karra K."/>
            <person name="Nash R.S."/>
            <person name="Weng S."/>
            <person name="Wong E.D."/>
            <person name="Lloyd P."/>
            <person name="Skrzypek M.S."/>
            <person name="Miyasato S.R."/>
            <person name="Simison M."/>
            <person name="Cherry J.M."/>
        </authorList>
    </citation>
    <scope>GENOME REANNOTATION</scope>
    <source>
        <strain>ATCC 204508 / S288c</strain>
    </source>
</reference>
<reference key="3">
    <citation type="journal article" date="2002" name="Nat. Biotechnol.">
        <title>An integrated approach for finding overlooked genes in yeast.</title>
        <authorList>
            <person name="Kumar A."/>
            <person name="Harrison P.M."/>
            <person name="Cheung K.-H."/>
            <person name="Lan N."/>
            <person name="Echols N."/>
            <person name="Bertone P."/>
            <person name="Miller P."/>
            <person name="Gerstein M.B."/>
            <person name="Snyder M."/>
        </authorList>
    </citation>
    <scope>NUCLEOTIDE SEQUENCE [GENOMIC DNA]</scope>
</reference>
<reference key="4">
    <citation type="journal article" date="2002" name="Genes Dev.">
        <title>A novel mitochondrial protein, Tar1p, is encoded on the antisense strand of the nuclear 25S rDNA.</title>
        <authorList>
            <person name="Coelho P.S.R."/>
            <person name="Bryan A.C."/>
            <person name="Kumar A."/>
            <person name="Shadel G.S."/>
            <person name="Snyder M."/>
        </authorList>
    </citation>
    <scope>FUNCTION</scope>
    <scope>SUBCELLULAR LOCATION</scope>
</reference>
<accession>Q8TGM6</accession>
<accession>D6VYF0</accession>
<protein>
    <recommendedName>
        <fullName>Protein TAR1</fullName>
    </recommendedName>
    <alternativeName>
        <fullName>Transcript antisense to ribosomal RNA protein 1</fullName>
    </alternativeName>
</protein>
<name>TAR1_YEAST</name>
<organism>
    <name type="scientific">Saccharomyces cerevisiae (strain ATCC 204508 / S288c)</name>
    <name type="common">Baker's yeast</name>
    <dbReference type="NCBI Taxonomy" id="559292"/>
    <lineage>
        <taxon>Eukaryota</taxon>
        <taxon>Fungi</taxon>
        <taxon>Dikarya</taxon>
        <taxon>Ascomycota</taxon>
        <taxon>Saccharomycotina</taxon>
        <taxon>Saccharomycetes</taxon>
        <taxon>Saccharomycetales</taxon>
        <taxon>Saccharomycetaceae</taxon>
        <taxon>Saccharomyces</taxon>
    </lineage>
</organism>
<proteinExistence type="evidence at transcript level"/>
<comment type="function">
    <text evidence="2">May be involved in mtDNA stability or mitochondrial gene expression regulation at the post-transcriptional level.</text>
</comment>
<comment type="subcellular location">
    <subcellularLocation>
        <location evidence="2">Mitochondrion</location>
    </subcellularLocation>
</comment>
<comment type="miscellaneous">
    <text>Encoded on the antisense strand of the nuclear 25S rDNA.</text>
</comment>
<sequence length="124" mass="14345">MRDSPTHKEQRAQNTMSDQMPFPFNNFTYFFTLFSKFFSSFHHCTCSLSVSRQYLALDGIYHPLRAAFPNNSTLRRHFTKNRTPRHTGFSPSMTSCSKEHRQGTAPKLPSPNYNSGTEGTRFQI</sequence>
<keyword id="KW-0496">Mitochondrion</keyword>
<keyword id="KW-1185">Reference proteome</keyword>
<dbReference type="EMBL" id="U53879">
    <property type="status" value="NOT_ANNOTATED_CDS"/>
    <property type="molecule type" value="Genomic_DNA"/>
</dbReference>
<dbReference type="EMBL" id="Z73326">
    <property type="status" value="NOT_ANNOTATED_CDS"/>
    <property type="molecule type" value="Genomic_DNA"/>
</dbReference>
<dbReference type="EMBL" id="AF479964">
    <property type="protein sequence ID" value="AAL79277.1"/>
    <property type="molecule type" value="Genomic_DNA"/>
</dbReference>
<dbReference type="EMBL" id="BK006945">
    <property type="protein sequence ID" value="DAA09466.1"/>
    <property type="molecule type" value="Genomic_DNA"/>
</dbReference>
<dbReference type="RefSeq" id="NP_690845.1">
    <property type="nucleotide sequence ID" value="NM_001184514.1"/>
</dbReference>
<dbReference type="BioGRID" id="300958">
    <property type="interactions" value="10"/>
</dbReference>
<dbReference type="FunCoup" id="Q8TGM6">
    <property type="interactions" value="13"/>
</dbReference>
<dbReference type="STRING" id="4932.YLR154W-C"/>
<dbReference type="PaxDb" id="4932-YLR154W-C"/>
<dbReference type="PeptideAtlas" id="Q8TGM6"/>
<dbReference type="EnsemblFungi" id="YLR154W-C_mRNA">
    <property type="protein sequence ID" value="YLR154W-C"/>
    <property type="gene ID" value="YLR154W-C"/>
</dbReference>
<dbReference type="GeneID" id="850849"/>
<dbReference type="KEGG" id="sce:YLR154W-C"/>
<dbReference type="AGR" id="SGD:S000028422"/>
<dbReference type="SGD" id="S000028422">
    <property type="gene designation" value="TAR1"/>
</dbReference>
<dbReference type="VEuPathDB" id="FungiDB:YLR154W-C"/>
<dbReference type="eggNOG" id="KOG4853">
    <property type="taxonomic scope" value="Eukaryota"/>
</dbReference>
<dbReference type="HOGENOM" id="CLU_159707_0_0_1"/>
<dbReference type="InParanoid" id="Q8TGM6"/>
<dbReference type="OMA" id="FNHYASI"/>
<dbReference type="OrthoDB" id="8092968at2759"/>
<dbReference type="BioCyc" id="YEAST:YLR154W-C-MONOMER"/>
<dbReference type="ChiTaRS" id="LDB19">
    <property type="organism name" value="yeast"/>
</dbReference>
<dbReference type="PRO" id="PR:Q8TGM6"/>
<dbReference type="Proteomes" id="UP000002311">
    <property type="component" value="Chromosome XII"/>
</dbReference>
<dbReference type="RNAct" id="Q8TGM6">
    <property type="molecule type" value="protein"/>
</dbReference>
<dbReference type="GO" id="GO:0005739">
    <property type="term" value="C:mitochondrion"/>
    <property type="evidence" value="ECO:0000315"/>
    <property type="project" value="SGD"/>
</dbReference>
<dbReference type="GO" id="GO:0043457">
    <property type="term" value="P:regulation of cellular respiration"/>
    <property type="evidence" value="ECO:0000316"/>
    <property type="project" value="SGD"/>
</dbReference>
<dbReference type="InterPro" id="IPR044792">
    <property type="entry name" value="TAR1"/>
</dbReference>
<dbReference type="PANTHER" id="PTHR47188">
    <property type="entry name" value="PROTEIN TAR1"/>
    <property type="match status" value="1"/>
</dbReference>
<dbReference type="PANTHER" id="PTHR47188:SF1">
    <property type="entry name" value="PROTEIN TAR1"/>
    <property type="match status" value="1"/>
</dbReference>
<feature type="chain" id="PRO_0000072432" description="Protein TAR1">
    <location>
        <begin position="1"/>
        <end position="124"/>
    </location>
</feature>
<feature type="region of interest" description="Disordered" evidence="1">
    <location>
        <begin position="80"/>
        <end position="124"/>
    </location>
</feature>
<feature type="compositionally biased region" description="Polar residues" evidence="1">
    <location>
        <begin position="111"/>
        <end position="124"/>
    </location>
</feature>
<evidence type="ECO:0000256" key="1">
    <source>
        <dbReference type="SAM" id="MobiDB-lite"/>
    </source>
</evidence>
<evidence type="ECO:0000269" key="2">
    <source>
    </source>
</evidence>